<feature type="chain" id="PRO_0000056533" description="Betaine aldehyde dehydrogenase">
    <location>
        <begin position="1"/>
        <end position="490"/>
    </location>
</feature>
<feature type="active site" evidence="2">
    <location>
        <position position="249"/>
    </location>
</feature>
<feature type="active site" evidence="3">
    <location>
        <position position="283"/>
    </location>
</feature>
<feature type="binding site" evidence="1">
    <location>
        <position position="174"/>
    </location>
    <ligand>
        <name>NAD(+)</name>
        <dbReference type="ChEBI" id="CHEBI:57540"/>
    </ligand>
</feature>
<feature type="binding site" evidence="1">
    <location>
        <position position="177"/>
    </location>
    <ligand>
        <name>NAD(+)</name>
        <dbReference type="ChEBI" id="CHEBI:57540"/>
    </ligand>
</feature>
<feature type="binding site" evidence="1">
    <location>
        <begin position="227"/>
        <end position="232"/>
    </location>
    <ligand>
        <name>NAD(+)</name>
        <dbReference type="ChEBI" id="CHEBI:57540"/>
    </ligand>
</feature>
<feature type="binding site" evidence="1">
    <location>
        <position position="384"/>
    </location>
    <ligand>
        <name>NAD(+)</name>
        <dbReference type="ChEBI" id="CHEBI:57540"/>
    </ligand>
</feature>
<reference key="1">
    <citation type="journal article" date="1996" name="J. Bacteriol.">
        <title>Synthesis of the osmoprotectant glycine betaine in Bacillus subtilis: characterization of the gbsAB genes.</title>
        <authorList>
            <person name="Boch J."/>
            <person name="Kempf B."/>
            <person name="Schmid R."/>
            <person name="Bremer E."/>
        </authorList>
    </citation>
    <scope>NUCLEOTIDE SEQUENCE [GENOMIC DNA]</scope>
    <scope>PROTEIN SEQUENCE OF 1-25</scope>
    <scope>FUNCTION</scope>
    <scope>PATHWAY</scope>
    <scope>INDUCTION</scope>
    <scope>DISRUPTION PHENOTYPE</scope>
    <source>
        <strain>168 / JH642</strain>
    </source>
</reference>
<reference key="2">
    <citation type="journal article" date="1997" name="Nature">
        <title>The complete genome sequence of the Gram-positive bacterium Bacillus subtilis.</title>
        <authorList>
            <person name="Kunst F."/>
            <person name="Ogasawara N."/>
            <person name="Moszer I."/>
            <person name="Albertini A.M."/>
            <person name="Alloni G."/>
            <person name="Azevedo V."/>
            <person name="Bertero M.G."/>
            <person name="Bessieres P."/>
            <person name="Bolotin A."/>
            <person name="Borchert S."/>
            <person name="Borriss R."/>
            <person name="Boursier L."/>
            <person name="Brans A."/>
            <person name="Braun M."/>
            <person name="Brignell S.C."/>
            <person name="Bron S."/>
            <person name="Brouillet S."/>
            <person name="Bruschi C.V."/>
            <person name="Caldwell B."/>
            <person name="Capuano V."/>
            <person name="Carter N.M."/>
            <person name="Choi S.-K."/>
            <person name="Codani J.-J."/>
            <person name="Connerton I.F."/>
            <person name="Cummings N.J."/>
            <person name="Daniel R.A."/>
            <person name="Denizot F."/>
            <person name="Devine K.M."/>
            <person name="Duesterhoeft A."/>
            <person name="Ehrlich S.D."/>
            <person name="Emmerson P.T."/>
            <person name="Entian K.-D."/>
            <person name="Errington J."/>
            <person name="Fabret C."/>
            <person name="Ferrari E."/>
            <person name="Foulger D."/>
            <person name="Fritz C."/>
            <person name="Fujita M."/>
            <person name="Fujita Y."/>
            <person name="Fuma S."/>
            <person name="Galizzi A."/>
            <person name="Galleron N."/>
            <person name="Ghim S.-Y."/>
            <person name="Glaser P."/>
            <person name="Goffeau A."/>
            <person name="Golightly E.J."/>
            <person name="Grandi G."/>
            <person name="Guiseppi G."/>
            <person name="Guy B.J."/>
            <person name="Haga K."/>
            <person name="Haiech J."/>
            <person name="Harwood C.R."/>
            <person name="Henaut A."/>
            <person name="Hilbert H."/>
            <person name="Holsappel S."/>
            <person name="Hosono S."/>
            <person name="Hullo M.-F."/>
            <person name="Itaya M."/>
            <person name="Jones L.-M."/>
            <person name="Joris B."/>
            <person name="Karamata D."/>
            <person name="Kasahara Y."/>
            <person name="Klaerr-Blanchard M."/>
            <person name="Klein C."/>
            <person name="Kobayashi Y."/>
            <person name="Koetter P."/>
            <person name="Koningstein G."/>
            <person name="Krogh S."/>
            <person name="Kumano M."/>
            <person name="Kurita K."/>
            <person name="Lapidus A."/>
            <person name="Lardinois S."/>
            <person name="Lauber J."/>
            <person name="Lazarevic V."/>
            <person name="Lee S.-M."/>
            <person name="Levine A."/>
            <person name="Liu H."/>
            <person name="Masuda S."/>
            <person name="Mauel C."/>
            <person name="Medigue C."/>
            <person name="Medina N."/>
            <person name="Mellado R.P."/>
            <person name="Mizuno M."/>
            <person name="Moestl D."/>
            <person name="Nakai S."/>
            <person name="Noback M."/>
            <person name="Noone D."/>
            <person name="O'Reilly M."/>
            <person name="Ogawa K."/>
            <person name="Ogiwara A."/>
            <person name="Oudega B."/>
            <person name="Park S.-H."/>
            <person name="Parro V."/>
            <person name="Pohl T.M."/>
            <person name="Portetelle D."/>
            <person name="Porwollik S."/>
            <person name="Prescott A.M."/>
            <person name="Presecan E."/>
            <person name="Pujic P."/>
            <person name="Purnelle B."/>
            <person name="Rapoport G."/>
            <person name="Rey M."/>
            <person name="Reynolds S."/>
            <person name="Rieger M."/>
            <person name="Rivolta C."/>
            <person name="Rocha E."/>
            <person name="Roche B."/>
            <person name="Rose M."/>
            <person name="Sadaie Y."/>
            <person name="Sato T."/>
            <person name="Scanlan E."/>
            <person name="Schleich S."/>
            <person name="Schroeter R."/>
            <person name="Scoffone F."/>
            <person name="Sekiguchi J."/>
            <person name="Sekowska A."/>
            <person name="Seror S.J."/>
            <person name="Serror P."/>
            <person name="Shin B.-S."/>
            <person name="Soldo B."/>
            <person name="Sorokin A."/>
            <person name="Tacconi E."/>
            <person name="Takagi T."/>
            <person name="Takahashi H."/>
            <person name="Takemaru K."/>
            <person name="Takeuchi M."/>
            <person name="Tamakoshi A."/>
            <person name="Tanaka T."/>
            <person name="Terpstra P."/>
            <person name="Tognoni A."/>
            <person name="Tosato V."/>
            <person name="Uchiyama S."/>
            <person name="Vandenbol M."/>
            <person name="Vannier F."/>
            <person name="Vassarotti A."/>
            <person name="Viari A."/>
            <person name="Wambutt R."/>
            <person name="Wedler E."/>
            <person name="Wedler H."/>
            <person name="Weitzenegger T."/>
            <person name="Winters P."/>
            <person name="Wipat A."/>
            <person name="Yamamoto H."/>
            <person name="Yamane K."/>
            <person name="Yasumoto K."/>
            <person name="Yata K."/>
            <person name="Yoshida K."/>
            <person name="Yoshikawa H.-F."/>
            <person name="Zumstein E."/>
            <person name="Yoshikawa H."/>
            <person name="Danchin A."/>
        </authorList>
    </citation>
    <scope>NUCLEOTIDE SEQUENCE [LARGE SCALE GENOMIC DNA]</scope>
    <source>
        <strain>168</strain>
    </source>
</reference>
<reference key="3">
    <citation type="journal article" date="1997" name="Arch. Microbiol.">
        <title>Glycine betaine aldehyde dehydrogenase from Bacillus subtilis: characterization of an enzyme required for the synthesis of the osmoprotectant glycine betaine.</title>
        <authorList>
            <person name="Boch J."/>
            <person name="Nau-Wagner G."/>
            <person name="Kneip S."/>
            <person name="Bremer E."/>
        </authorList>
    </citation>
    <scope>FUNCTION</scope>
    <scope>CATALYTIC ACTIVITY</scope>
    <scope>ACTIVITY REGULATION</scope>
    <scope>BIOPHYSICOCHEMICAL PROPERTIES</scope>
    <scope>SUBUNIT</scope>
</reference>
<reference key="4">
    <citation type="journal article" date="2012" name="J. Bacteriol.">
        <title>Genetic control of osmoadaptive glycine betaine synthesis in Bacillus subtilis through the choline-sensing and glycine betaine-responsive GbsR repressor.</title>
        <authorList>
            <person name="Nau-Wagner G."/>
            <person name="Opper D."/>
            <person name="Rolbetzki A."/>
            <person name="Boch J."/>
            <person name="Kempf B."/>
            <person name="Hoffmann T."/>
            <person name="Bremer E."/>
        </authorList>
    </citation>
    <scope>INDUCTION</scope>
    <source>
        <strain>168 / JH642</strain>
    </source>
</reference>
<reference key="5">
    <citation type="journal article" date="2016" name="Appl. Microbiol. Biotechnol.">
        <title>Identification and characterization of the vanillin dehydrogenase YfmT in Bacillus subtilis 3NA.</title>
        <authorList>
            <person name="Graf N."/>
            <person name="Wenzel M."/>
            <person name="Altenbuchner J."/>
        </authorList>
    </citation>
    <scope>DISRUPTION PHENOTYPE</scope>
    <source>
        <strain>168 / 3NA</strain>
    </source>
</reference>
<protein>
    <recommendedName>
        <fullName evidence="9">Betaine aldehyde dehydrogenase</fullName>
        <shortName evidence="9">BADH</shortName>
        <ecNumber evidence="7">1.2.1.8</ecNumber>
    </recommendedName>
    <alternativeName>
        <fullName evidence="8">Glycine betaine aldehyde dehydrogenase</fullName>
    </alternativeName>
</protein>
<keyword id="KW-0903">Direct protein sequencing</keyword>
<keyword id="KW-0520">NAD</keyword>
<keyword id="KW-0560">Oxidoreductase</keyword>
<keyword id="KW-1185">Reference proteome</keyword>
<gene>
    <name evidence="8" type="primary">gbsA</name>
    <name type="ordered locus">BSU31060</name>
</gene>
<accession>P71016</accession>
<sequence length="490" mass="53666">MSQTLFIDGEWISAEKEQIRSIINPFNQEEIATVSEGGREDAIKAIAAARRAFDKGEWSSLSGLERGKIVLKIAELIRRDLEELAELESLDTGKTLEESKADMDDIANVFQYYAGLADKDGGEIISSPIPDSESKIIREPIGVCGQITPWNYPLLQASWKIAPALAAGNTIVMKPSEITPLTTIKVFKLMEEAGVPKGVANLVLGPGATVGDELAVNKDVDLISFTGGIETGKKIMRAASGNVKKIALELGGKNPNIVFKDADLEVAVDQALNAVFFHAGQVCSAGSRLLVEDAIHDQFLAELVKRAKRIKLGNGFHAETESGPLISAEHRAKVEKYVEIGIEEGAKLETGGKRPEDPELQNGFFYEPTIFSNCNSDMRIVQEEVFGPVLTVETFSSEEEVIELANDTIYGLAGAVWSKDIEKCERVAARLRMGTVWINDFHPYFAQAPWGGYKQSGFGRELGKIGLEEYTEVKHVYRNTKPAAVNWFNS</sequence>
<name>GBSA_BACSU</name>
<organism>
    <name type="scientific">Bacillus subtilis (strain 168)</name>
    <dbReference type="NCBI Taxonomy" id="224308"/>
    <lineage>
        <taxon>Bacteria</taxon>
        <taxon>Bacillati</taxon>
        <taxon>Bacillota</taxon>
        <taxon>Bacilli</taxon>
        <taxon>Bacillales</taxon>
        <taxon>Bacillaceae</taxon>
        <taxon>Bacillus</taxon>
    </lineage>
</organism>
<proteinExistence type="evidence at protein level"/>
<comment type="function">
    <text evidence="6 7">Involved in the biosynthesis of the osmoprotectant glycine betaine from choline (PubMed:8752328, PubMed:9297465). Catalyzes the oxidation of betaine aldehyde to betaine (PubMed:9297465). Shows specificity for betaine aldehyde as substrate. Can use both NAD(+) and NADP(+), but NAD(+) is strongly preferred (PubMed:9297465).</text>
</comment>
<comment type="catalytic activity">
    <reaction evidence="7">
        <text>betaine aldehyde + NAD(+) + H2O = glycine betaine + NADH + 2 H(+)</text>
        <dbReference type="Rhea" id="RHEA:15305"/>
        <dbReference type="ChEBI" id="CHEBI:15377"/>
        <dbReference type="ChEBI" id="CHEBI:15378"/>
        <dbReference type="ChEBI" id="CHEBI:15710"/>
        <dbReference type="ChEBI" id="CHEBI:17750"/>
        <dbReference type="ChEBI" id="CHEBI:57540"/>
        <dbReference type="ChEBI" id="CHEBI:57945"/>
        <dbReference type="EC" id="1.2.1.8"/>
    </reaction>
    <physiologicalReaction direction="left-to-right" evidence="7">
        <dbReference type="Rhea" id="RHEA:15306"/>
    </physiologicalReaction>
</comment>
<comment type="activity regulation">
    <text evidence="7">Activity is stimulated by low concentrations of salts and by moderate concentrations of glycine betaine. Highly tolerant to high ionic conditions. In vitro, activity is highly stimulated in the presence of proline.</text>
</comment>
<comment type="biophysicochemical properties">
    <kinetics>
        <KM evidence="7">125 uM for betaine aldehyde</KM>
        <KM evidence="7">143 uM for NAD(+)</KM>
    </kinetics>
    <phDependence>
        <text evidence="7">Optimum pH is 8.0.</text>
    </phDependence>
</comment>
<comment type="pathway">
    <text evidence="6">Amine and polyamine biosynthesis; betaine biosynthesis via choline pathway; betaine from betaine aldehyde: step 1/1.</text>
</comment>
<comment type="subunit">
    <text evidence="7">Homodimer.</text>
</comment>
<comment type="induction">
    <text evidence="4 6">By choline and by high osmolarity in the presence of choline (PubMed:22408163, PubMed:8752328). Repressed by GbsR (PubMed:22408163).</text>
</comment>
<comment type="disruption phenotype">
    <text evidence="5 6">Deletion of the gbsAB genes abolishes the choline-glycine betaine synthesis pathway and the ability of B.subtilis to deal effectively with high-osmolarity stress in choline- or glycine betaine aldehyde-containing medium (PubMed:8752328). No effect on vanillin degradation (PubMed:26658822).</text>
</comment>
<comment type="similarity">
    <text evidence="9">Belongs to the aldehyde dehydrogenase family.</text>
</comment>
<evidence type="ECO:0000250" key="1">
    <source>
        <dbReference type="UniProtKB" id="P47895"/>
    </source>
</evidence>
<evidence type="ECO:0000255" key="2">
    <source>
        <dbReference type="PROSITE-ProRule" id="PRU10007"/>
    </source>
</evidence>
<evidence type="ECO:0000255" key="3">
    <source>
        <dbReference type="PROSITE-ProRule" id="PRU10008"/>
    </source>
</evidence>
<evidence type="ECO:0000269" key="4">
    <source>
    </source>
</evidence>
<evidence type="ECO:0000269" key="5">
    <source>
    </source>
</evidence>
<evidence type="ECO:0000269" key="6">
    <source>
    </source>
</evidence>
<evidence type="ECO:0000269" key="7">
    <source>
    </source>
</evidence>
<evidence type="ECO:0000303" key="8">
    <source>
    </source>
</evidence>
<evidence type="ECO:0000305" key="9"/>
<dbReference type="EC" id="1.2.1.8" evidence="7"/>
<dbReference type="EMBL" id="U47861">
    <property type="protein sequence ID" value="AAC44364.1"/>
    <property type="molecule type" value="Genomic_DNA"/>
</dbReference>
<dbReference type="EMBL" id="AL009126">
    <property type="protein sequence ID" value="CAB15084.1"/>
    <property type="molecule type" value="Genomic_DNA"/>
</dbReference>
<dbReference type="PIR" id="A69629">
    <property type="entry name" value="A69629"/>
</dbReference>
<dbReference type="RefSeq" id="NP_390984.1">
    <property type="nucleotide sequence ID" value="NC_000964.3"/>
</dbReference>
<dbReference type="SMR" id="P71016"/>
<dbReference type="FunCoup" id="P71016">
    <property type="interactions" value="115"/>
</dbReference>
<dbReference type="STRING" id="224308.BSU31060"/>
<dbReference type="PaxDb" id="224308-BSU31060"/>
<dbReference type="EnsemblBacteria" id="CAB15084">
    <property type="protein sequence ID" value="CAB15084"/>
    <property type="gene ID" value="BSU_31060"/>
</dbReference>
<dbReference type="GeneID" id="938829"/>
<dbReference type="KEGG" id="bsu:BSU31060"/>
<dbReference type="PATRIC" id="fig|224308.179.peg.3366"/>
<dbReference type="eggNOG" id="COG1012">
    <property type="taxonomic scope" value="Bacteria"/>
</dbReference>
<dbReference type="InParanoid" id="P71016"/>
<dbReference type="OrthoDB" id="9762913at2"/>
<dbReference type="PhylomeDB" id="P71016"/>
<dbReference type="BioCyc" id="BSUB:BSU31060-MONOMER"/>
<dbReference type="BioCyc" id="MetaCyc:MONOMER-8602"/>
<dbReference type="UniPathway" id="UPA00529">
    <property type="reaction ID" value="UER00386"/>
</dbReference>
<dbReference type="Proteomes" id="UP000001570">
    <property type="component" value="Chromosome"/>
</dbReference>
<dbReference type="GO" id="GO:0008802">
    <property type="term" value="F:betaine-aldehyde dehydrogenase (NAD+) activity"/>
    <property type="evidence" value="ECO:0007669"/>
    <property type="project" value="UniProtKB-EC"/>
</dbReference>
<dbReference type="GO" id="GO:0046872">
    <property type="term" value="F:metal ion binding"/>
    <property type="evidence" value="ECO:0007669"/>
    <property type="project" value="InterPro"/>
</dbReference>
<dbReference type="GO" id="GO:0019285">
    <property type="term" value="P:glycine betaine biosynthetic process from choline"/>
    <property type="evidence" value="ECO:0007669"/>
    <property type="project" value="UniProtKB-UniPathway"/>
</dbReference>
<dbReference type="CDD" id="cd07119">
    <property type="entry name" value="ALDH_BADH-GbsA"/>
    <property type="match status" value="1"/>
</dbReference>
<dbReference type="FunFam" id="3.40.605.10:FF:000026">
    <property type="entry name" value="Aldehyde dehydrogenase, putative"/>
    <property type="match status" value="1"/>
</dbReference>
<dbReference type="FunFam" id="3.40.309.10:FF:000012">
    <property type="entry name" value="Betaine aldehyde dehydrogenase"/>
    <property type="match status" value="1"/>
</dbReference>
<dbReference type="FunFam" id="3.40.605.10:FF:000007">
    <property type="entry name" value="NAD/NADP-dependent betaine aldehyde dehydrogenase"/>
    <property type="match status" value="1"/>
</dbReference>
<dbReference type="Gene3D" id="3.40.605.10">
    <property type="entry name" value="Aldehyde Dehydrogenase, Chain A, domain 1"/>
    <property type="match status" value="1"/>
</dbReference>
<dbReference type="Gene3D" id="3.40.309.10">
    <property type="entry name" value="Aldehyde Dehydrogenase, Chain A, domain 2"/>
    <property type="match status" value="1"/>
</dbReference>
<dbReference type="InterPro" id="IPR016161">
    <property type="entry name" value="Ald_DH/histidinol_DH"/>
</dbReference>
<dbReference type="InterPro" id="IPR016163">
    <property type="entry name" value="Ald_DH_C"/>
</dbReference>
<dbReference type="InterPro" id="IPR016160">
    <property type="entry name" value="Ald_DH_CS_CYS"/>
</dbReference>
<dbReference type="InterPro" id="IPR029510">
    <property type="entry name" value="Ald_DH_CS_GLU"/>
</dbReference>
<dbReference type="InterPro" id="IPR016162">
    <property type="entry name" value="Ald_DH_N"/>
</dbReference>
<dbReference type="InterPro" id="IPR015590">
    <property type="entry name" value="Aldehyde_DH_dom"/>
</dbReference>
<dbReference type="InterPro" id="IPR011264">
    <property type="entry name" value="BADH"/>
</dbReference>
<dbReference type="NCBIfam" id="TIGR01804">
    <property type="entry name" value="BADH"/>
    <property type="match status" value="1"/>
</dbReference>
<dbReference type="PANTHER" id="PTHR43860">
    <property type="entry name" value="BETAINE ALDEHYDE DEHYDROGENASE"/>
    <property type="match status" value="1"/>
</dbReference>
<dbReference type="PANTHER" id="PTHR43860:SF2">
    <property type="entry name" value="BETAINE ALDEHYDE DEHYDROGENASE-RELATED"/>
    <property type="match status" value="1"/>
</dbReference>
<dbReference type="Pfam" id="PF00171">
    <property type="entry name" value="Aldedh"/>
    <property type="match status" value="1"/>
</dbReference>
<dbReference type="SUPFAM" id="SSF53720">
    <property type="entry name" value="ALDH-like"/>
    <property type="match status" value="1"/>
</dbReference>
<dbReference type="PROSITE" id="PS00070">
    <property type="entry name" value="ALDEHYDE_DEHYDR_CYS"/>
    <property type="match status" value="1"/>
</dbReference>
<dbReference type="PROSITE" id="PS00687">
    <property type="entry name" value="ALDEHYDE_DEHYDR_GLU"/>
    <property type="match status" value="1"/>
</dbReference>